<proteinExistence type="inferred from homology"/>
<evidence type="ECO:0000255" key="1">
    <source>
        <dbReference type="HAMAP-Rule" id="MF_01416"/>
    </source>
</evidence>
<keyword id="KW-0066">ATP synthesis</keyword>
<keyword id="KW-1003">Cell membrane</keyword>
<keyword id="KW-0139">CF(1)</keyword>
<keyword id="KW-0375">Hydrogen ion transport</keyword>
<keyword id="KW-0406">Ion transport</keyword>
<keyword id="KW-0472">Membrane</keyword>
<keyword id="KW-0813">Transport</keyword>
<comment type="function">
    <text evidence="1">F(1)F(0) ATP synthase produces ATP from ADP in the presence of a proton or sodium gradient. F-type ATPases consist of two structural domains, F(1) containing the extramembraneous catalytic core and F(0) containing the membrane proton channel, linked together by a central stalk and a peripheral stalk. During catalysis, ATP synthesis in the catalytic domain of F(1) is coupled via a rotary mechanism of the central stalk subunits to proton translocation.</text>
</comment>
<comment type="function">
    <text evidence="1">This protein is part of the stalk that links CF(0) to CF(1). It either transmits conformational changes from CF(0) to CF(1) or is implicated in proton conduction.</text>
</comment>
<comment type="subunit">
    <text evidence="1">F-type ATPases have 2 components, F(1) - the catalytic core - and F(0) - the membrane proton channel. F(1) has five subunits: alpha(3), beta(3), gamma(1), delta(1), epsilon(1). F(0) has three main subunits: a(1), b(2) and c(10-14). The alpha and beta chains form an alternating ring which encloses part of the gamma chain. F(1) is attached to F(0) by a central stalk formed by the gamma and epsilon chains, while a peripheral stalk is formed by the delta and b chains.</text>
</comment>
<comment type="subcellular location">
    <subcellularLocation>
        <location evidence="1">Cell membrane</location>
        <topology evidence="1">Peripheral membrane protein</topology>
    </subcellularLocation>
</comment>
<comment type="similarity">
    <text evidence="1">Belongs to the ATPase delta chain family.</text>
</comment>
<protein>
    <recommendedName>
        <fullName evidence="1">ATP synthase subunit delta</fullName>
    </recommendedName>
    <alternativeName>
        <fullName evidence="1">ATP synthase F(1) sector subunit delta</fullName>
    </alternativeName>
    <alternativeName>
        <fullName evidence="1">F-type ATPase subunit delta</fullName>
        <shortName evidence="1">F-ATPase subunit delta</shortName>
    </alternativeName>
</protein>
<reference key="1">
    <citation type="journal article" date="2008" name="BMC Genomics">
        <title>Comparative genomic analysis of the gut bacterium Bifidobacterium longum reveals loci susceptible to deletion during pure culture growth.</title>
        <authorList>
            <person name="Lee J.H."/>
            <person name="Karamychev V.N."/>
            <person name="Kozyavkin S.A."/>
            <person name="Mills D."/>
            <person name="Pavlov A.R."/>
            <person name="Pavlova N.V."/>
            <person name="Polouchine N.N."/>
            <person name="Richardson P.M."/>
            <person name="Shakhova V.V."/>
            <person name="Slesarev A.I."/>
            <person name="Weimer B."/>
            <person name="O'Sullivan D.J."/>
        </authorList>
    </citation>
    <scope>NUCLEOTIDE SEQUENCE [LARGE SCALE GENOMIC DNA]</scope>
    <source>
        <strain>DJO10A</strain>
    </source>
</reference>
<gene>
    <name evidence="1" type="primary">atpH</name>
    <name type="ordered locus">BLD_1126</name>
</gene>
<organism>
    <name type="scientific">Bifidobacterium longum (strain DJO10A)</name>
    <dbReference type="NCBI Taxonomy" id="205913"/>
    <lineage>
        <taxon>Bacteria</taxon>
        <taxon>Bacillati</taxon>
        <taxon>Actinomycetota</taxon>
        <taxon>Actinomycetes</taxon>
        <taxon>Bifidobacteriales</taxon>
        <taxon>Bifidobacteriaceae</taxon>
        <taxon>Bifidobacterium</taxon>
    </lineage>
</organism>
<accession>B3DTV3</accession>
<sequence length="278" mass="31463">MRGEASRIADRESRDSLAPKLRDTREDAWRIGNELFTITKVLDDSIQLERALTDPSRPVADKVAVLKELLGDNAHPMTMEIMTDLVSRRWSRARDIANAVEDFGVDAMMYYADATDATLQVSIELSELHSALLNLPVVRAKLYDYQATSEARVKLFREVFSGKTLNKVTMRLAEHATCNLRRRRYLETIQWLINKFSRHMGESMVTVTTATPLKKEQIKRLVEVYSAKVGRQVHINSVVDPTVLGGMRIQVGDEVTDNTVVAQLQNLHRKVQTEATPA</sequence>
<name>ATPD_BIFLD</name>
<feature type="chain" id="PRO_0000382063" description="ATP synthase subunit delta">
    <location>
        <begin position="1"/>
        <end position="278"/>
    </location>
</feature>
<dbReference type="EMBL" id="CP000605">
    <property type="protein sequence ID" value="ACD98572.1"/>
    <property type="molecule type" value="Genomic_DNA"/>
</dbReference>
<dbReference type="RefSeq" id="WP_007054765.1">
    <property type="nucleotide sequence ID" value="NZ_AABM02000027.1"/>
</dbReference>
<dbReference type="SMR" id="B3DTV3"/>
<dbReference type="KEGG" id="blj:BLD_1126"/>
<dbReference type="HOGENOM" id="CLU_088880_0_0_11"/>
<dbReference type="Proteomes" id="UP000002419">
    <property type="component" value="Chromosome"/>
</dbReference>
<dbReference type="GO" id="GO:0005886">
    <property type="term" value="C:plasma membrane"/>
    <property type="evidence" value="ECO:0007669"/>
    <property type="project" value="UniProtKB-SubCell"/>
</dbReference>
<dbReference type="GO" id="GO:0045259">
    <property type="term" value="C:proton-transporting ATP synthase complex"/>
    <property type="evidence" value="ECO:0007669"/>
    <property type="project" value="UniProtKB-KW"/>
</dbReference>
<dbReference type="GO" id="GO:0046933">
    <property type="term" value="F:proton-transporting ATP synthase activity, rotational mechanism"/>
    <property type="evidence" value="ECO:0007669"/>
    <property type="project" value="UniProtKB-UniRule"/>
</dbReference>
<dbReference type="HAMAP" id="MF_01416">
    <property type="entry name" value="ATP_synth_delta_bact"/>
    <property type="match status" value="1"/>
</dbReference>
<dbReference type="InterPro" id="IPR020781">
    <property type="entry name" value="ATPase_OSCP/d_CS"/>
</dbReference>
<dbReference type="InterPro" id="IPR000711">
    <property type="entry name" value="ATPase_OSCP/dsu"/>
</dbReference>
<dbReference type="NCBIfam" id="NF009967">
    <property type="entry name" value="PRK13430.1"/>
    <property type="match status" value="1"/>
</dbReference>
<dbReference type="PANTHER" id="PTHR11910">
    <property type="entry name" value="ATP SYNTHASE DELTA CHAIN"/>
    <property type="match status" value="1"/>
</dbReference>
<dbReference type="Pfam" id="PF00213">
    <property type="entry name" value="OSCP"/>
    <property type="match status" value="1"/>
</dbReference>
<dbReference type="PRINTS" id="PR00125">
    <property type="entry name" value="ATPASEDELTA"/>
</dbReference>
<dbReference type="PROSITE" id="PS00389">
    <property type="entry name" value="ATPASE_DELTA"/>
    <property type="match status" value="1"/>
</dbReference>